<proteinExistence type="inferred from homology"/>
<evidence type="ECO:0000250" key="1"/>
<evidence type="ECO:0000305" key="2"/>
<name>GATB_MYCPN</name>
<feature type="chain" id="PRO_0000148811" description="Aspartyl/glutamyl-tRNA(Asn/Gln) amidotransferase subunit B">
    <location>
        <begin position="1"/>
        <end position="477"/>
    </location>
</feature>
<keyword id="KW-0067">ATP-binding</keyword>
<keyword id="KW-0436">Ligase</keyword>
<keyword id="KW-0547">Nucleotide-binding</keyword>
<keyword id="KW-0648">Protein biosynthesis</keyword>
<keyword id="KW-1185">Reference proteome</keyword>
<dbReference type="EC" id="6.3.5.-"/>
<dbReference type="EMBL" id="U00089">
    <property type="protein sequence ID" value="AAB96241.1"/>
    <property type="status" value="ALT_INIT"/>
    <property type="molecule type" value="Genomic_DNA"/>
</dbReference>
<dbReference type="PIR" id="S73919">
    <property type="entry name" value="S73919"/>
</dbReference>
<dbReference type="RefSeq" id="NP_109926.1">
    <property type="nucleotide sequence ID" value="NC_000912.1"/>
</dbReference>
<dbReference type="RefSeq" id="WP_014574916.1">
    <property type="nucleotide sequence ID" value="NZ_OU342337.1"/>
</dbReference>
<dbReference type="SMR" id="P75533"/>
<dbReference type="STRING" id="272634.MPN_238"/>
<dbReference type="EnsemblBacteria" id="AAB96241">
    <property type="protein sequence ID" value="AAB96241"/>
    <property type="gene ID" value="MPN_238"/>
</dbReference>
<dbReference type="GeneID" id="66609116"/>
<dbReference type="KEGG" id="mpn:MPN_238"/>
<dbReference type="PATRIC" id="fig|272634.6.peg.257"/>
<dbReference type="HOGENOM" id="CLU_019240_0_1_14"/>
<dbReference type="OrthoDB" id="9804078at2"/>
<dbReference type="Proteomes" id="UP000000808">
    <property type="component" value="Chromosome"/>
</dbReference>
<dbReference type="GO" id="GO:0050566">
    <property type="term" value="F:asparaginyl-tRNA synthase (glutamine-hydrolyzing) activity"/>
    <property type="evidence" value="ECO:0007669"/>
    <property type="project" value="RHEA"/>
</dbReference>
<dbReference type="GO" id="GO:0005524">
    <property type="term" value="F:ATP binding"/>
    <property type="evidence" value="ECO:0007669"/>
    <property type="project" value="UniProtKB-KW"/>
</dbReference>
<dbReference type="GO" id="GO:0050567">
    <property type="term" value="F:glutaminyl-tRNA synthase (glutamine-hydrolyzing) activity"/>
    <property type="evidence" value="ECO:0007669"/>
    <property type="project" value="UniProtKB-UniRule"/>
</dbReference>
<dbReference type="GO" id="GO:0070681">
    <property type="term" value="P:glutaminyl-tRNAGln biosynthesis via transamidation"/>
    <property type="evidence" value="ECO:0007669"/>
    <property type="project" value="TreeGrafter"/>
</dbReference>
<dbReference type="GO" id="GO:0006412">
    <property type="term" value="P:translation"/>
    <property type="evidence" value="ECO:0007669"/>
    <property type="project" value="UniProtKB-UniRule"/>
</dbReference>
<dbReference type="Gene3D" id="1.10.10.410">
    <property type="match status" value="1"/>
</dbReference>
<dbReference type="HAMAP" id="MF_00121">
    <property type="entry name" value="GatB"/>
    <property type="match status" value="1"/>
</dbReference>
<dbReference type="InterPro" id="IPR017959">
    <property type="entry name" value="Asn/Gln-tRNA_amidoTrfase_suB/E"/>
</dbReference>
<dbReference type="InterPro" id="IPR006075">
    <property type="entry name" value="Asn/Gln-tRNA_Trfase_suB/E_cat"/>
</dbReference>
<dbReference type="InterPro" id="IPR018027">
    <property type="entry name" value="Asn/Gln_amidotransferase"/>
</dbReference>
<dbReference type="InterPro" id="IPR003789">
    <property type="entry name" value="Asn/Gln_tRNA_amidoTrase-B-like"/>
</dbReference>
<dbReference type="InterPro" id="IPR004413">
    <property type="entry name" value="GatB"/>
</dbReference>
<dbReference type="InterPro" id="IPR023168">
    <property type="entry name" value="GatB_Yqey_C_2"/>
</dbReference>
<dbReference type="InterPro" id="IPR017958">
    <property type="entry name" value="Gln-tRNA_amidoTrfase_suB_CS"/>
</dbReference>
<dbReference type="InterPro" id="IPR014746">
    <property type="entry name" value="Gln_synth/guanido_kin_cat_dom"/>
</dbReference>
<dbReference type="NCBIfam" id="TIGR00133">
    <property type="entry name" value="gatB"/>
    <property type="match status" value="1"/>
</dbReference>
<dbReference type="NCBIfam" id="NF004012">
    <property type="entry name" value="PRK05477.1-2"/>
    <property type="match status" value="1"/>
</dbReference>
<dbReference type="PANTHER" id="PTHR11659">
    <property type="entry name" value="GLUTAMYL-TRNA GLN AMIDOTRANSFERASE SUBUNIT B MITOCHONDRIAL AND PROKARYOTIC PET112-RELATED"/>
    <property type="match status" value="1"/>
</dbReference>
<dbReference type="PANTHER" id="PTHR11659:SF0">
    <property type="entry name" value="GLUTAMYL-TRNA(GLN) AMIDOTRANSFERASE SUBUNIT B, MITOCHONDRIAL"/>
    <property type="match status" value="1"/>
</dbReference>
<dbReference type="Pfam" id="PF02934">
    <property type="entry name" value="GatB_N"/>
    <property type="match status" value="1"/>
</dbReference>
<dbReference type="Pfam" id="PF02637">
    <property type="entry name" value="GatB_Yqey"/>
    <property type="match status" value="1"/>
</dbReference>
<dbReference type="SMART" id="SM00845">
    <property type="entry name" value="GatB_Yqey"/>
    <property type="match status" value="1"/>
</dbReference>
<dbReference type="SUPFAM" id="SSF89095">
    <property type="entry name" value="GatB/YqeY motif"/>
    <property type="match status" value="1"/>
</dbReference>
<dbReference type="SUPFAM" id="SSF55931">
    <property type="entry name" value="Glutamine synthetase/guanido kinase"/>
    <property type="match status" value="1"/>
</dbReference>
<dbReference type="PROSITE" id="PS01234">
    <property type="entry name" value="GATB"/>
    <property type="match status" value="1"/>
</dbReference>
<organism>
    <name type="scientific">Mycoplasma pneumoniae (strain ATCC 29342 / M129 / Subtype 1)</name>
    <name type="common">Mycoplasmoides pneumoniae</name>
    <dbReference type="NCBI Taxonomy" id="272634"/>
    <lineage>
        <taxon>Bacteria</taxon>
        <taxon>Bacillati</taxon>
        <taxon>Mycoplasmatota</taxon>
        <taxon>Mycoplasmoidales</taxon>
        <taxon>Mycoplasmoidaceae</taxon>
        <taxon>Mycoplasmoides</taxon>
    </lineage>
</organism>
<gene>
    <name type="primary">gatB</name>
    <name type="ordered locus">MPN_238</name>
    <name type="ORF">MP593</name>
</gene>
<accession>P75533</accession>
<protein>
    <recommendedName>
        <fullName>Aspartyl/glutamyl-tRNA(Asn/Gln) amidotransferase subunit B</fullName>
        <shortName>Asp/Glu-ADT subunit B</shortName>
        <ecNumber>6.3.5.-</ecNumber>
    </recommendedName>
</protein>
<reference key="1">
    <citation type="journal article" date="1996" name="Nucleic Acids Res.">
        <title>Complete sequence analysis of the genome of the bacterium Mycoplasma pneumoniae.</title>
        <authorList>
            <person name="Himmelreich R."/>
            <person name="Hilbert H."/>
            <person name="Plagens H."/>
            <person name="Pirkl E."/>
            <person name="Li B.-C."/>
            <person name="Herrmann R."/>
        </authorList>
    </citation>
    <scope>NUCLEOTIDE SEQUENCE [LARGE SCALE GENOMIC DNA]</scope>
    <source>
        <strain>ATCC 29342 / M129 / Subtype 1</strain>
    </source>
</reference>
<sequence>MINFEAIIGIEVHVVLNTATKMFSPAPNQAQNATPNQFINAIDLGLPGTMPQVNEQAVQKALILADALNMQRVQPVLVFDRKHYFYQDLPKGFQITQQNFPIAQNGYVEIVENNKAQRIIIERFHLEEDTAKQHFVDGQILLDFNRCGAPLIEVVTAPVIKSAKQSKAYLQKLRQILIVNNISNAKLEDGSMRSDCNVSVRLKGQTAFGTKVEIKNINSLNNVEKAIDLEIARQVKALIKGEPVQQVTLTYDDKTNTNVFMRKKDNSVDYRYFIEPNIMSSNIDELLQKPNKAFNLTEFFTKLKEAGVNEQLNQLVVDDLTLFNAYTKINSVINSPQDTIRWLCIELMGQLNKLQKPLKDKTIDHLIILIQMVQKGTVNQKQAKQLIELMLDNGQDPQSLAKLHNLEQITDEKQLTQIIQQIFKENEGEILKNLDRVERIQKLIIGQVMQRTHNRANPQQVFIIVEKLLHDFSERAS</sequence>
<comment type="function">
    <text evidence="1">Allows the formation of correctly charged Asn-tRNA(Asn) or Gln-tRNA(Gln) through the transamidation of misacylated Asp-tRNA(Asn) or Glu-tRNA(Gln) in organisms which lack either or both of asparaginyl-tRNA or glutaminyl-tRNA synthetases. The reaction takes place in the presence of glutamine and ATP through an activated phospho-Asp-tRNA(Asn) or phospho-Glu-tRNA(Gln) (By similarity).</text>
</comment>
<comment type="catalytic activity">
    <reaction>
        <text>L-glutamyl-tRNA(Gln) + L-glutamine + ATP + H2O = L-glutaminyl-tRNA(Gln) + L-glutamate + ADP + phosphate + H(+)</text>
        <dbReference type="Rhea" id="RHEA:17521"/>
        <dbReference type="Rhea" id="RHEA-COMP:9681"/>
        <dbReference type="Rhea" id="RHEA-COMP:9684"/>
        <dbReference type="ChEBI" id="CHEBI:15377"/>
        <dbReference type="ChEBI" id="CHEBI:15378"/>
        <dbReference type="ChEBI" id="CHEBI:29985"/>
        <dbReference type="ChEBI" id="CHEBI:30616"/>
        <dbReference type="ChEBI" id="CHEBI:43474"/>
        <dbReference type="ChEBI" id="CHEBI:58359"/>
        <dbReference type="ChEBI" id="CHEBI:78520"/>
        <dbReference type="ChEBI" id="CHEBI:78521"/>
        <dbReference type="ChEBI" id="CHEBI:456216"/>
    </reaction>
</comment>
<comment type="catalytic activity">
    <reaction>
        <text>L-aspartyl-tRNA(Asn) + L-glutamine + ATP + H2O = L-asparaginyl-tRNA(Asn) + L-glutamate + ADP + phosphate + 2 H(+)</text>
        <dbReference type="Rhea" id="RHEA:14513"/>
        <dbReference type="Rhea" id="RHEA-COMP:9674"/>
        <dbReference type="Rhea" id="RHEA-COMP:9677"/>
        <dbReference type="ChEBI" id="CHEBI:15377"/>
        <dbReference type="ChEBI" id="CHEBI:15378"/>
        <dbReference type="ChEBI" id="CHEBI:29985"/>
        <dbReference type="ChEBI" id="CHEBI:30616"/>
        <dbReference type="ChEBI" id="CHEBI:43474"/>
        <dbReference type="ChEBI" id="CHEBI:58359"/>
        <dbReference type="ChEBI" id="CHEBI:78515"/>
        <dbReference type="ChEBI" id="CHEBI:78516"/>
        <dbReference type="ChEBI" id="CHEBI:456216"/>
    </reaction>
</comment>
<comment type="subunit">
    <text evidence="1">Heterotrimer of A, B and C subunits.</text>
</comment>
<comment type="similarity">
    <text evidence="2">Belongs to the GatB/GatE family. GatB subfamily.</text>
</comment>
<comment type="sequence caution" evidence="2">
    <conflict type="erroneous initiation">
        <sequence resource="EMBL-CDS" id="AAB96241"/>
    </conflict>
</comment>